<evidence type="ECO:0000255" key="1">
    <source>
        <dbReference type="HAMAP-Rule" id="MF_01365"/>
    </source>
</evidence>
<evidence type="ECO:0000305" key="2"/>
<comment type="function">
    <text evidence="1">This protein binds to the 23S rRNA, and is important in its secondary structure. It is located near the subunit interface in the base of the L7/L12 stalk, and near the tRNA binding site of the peptidyltransferase center.</text>
</comment>
<comment type="subunit">
    <text evidence="1">Part of the 50S ribosomal subunit.</text>
</comment>
<comment type="similarity">
    <text evidence="1">Belongs to the universal ribosomal protein uL6 family.</text>
</comment>
<proteinExistence type="inferred from homology"/>
<gene>
    <name evidence="1" type="primary">rplF</name>
    <name type="ordered locus">Cbei_0166</name>
</gene>
<reference key="1">
    <citation type="submission" date="2007-06" db="EMBL/GenBank/DDBJ databases">
        <title>Complete sequence of Clostridium beijerinckii NCIMB 8052.</title>
        <authorList>
            <consortium name="US DOE Joint Genome Institute"/>
            <person name="Copeland A."/>
            <person name="Lucas S."/>
            <person name="Lapidus A."/>
            <person name="Barry K."/>
            <person name="Detter J.C."/>
            <person name="Glavina del Rio T."/>
            <person name="Hammon N."/>
            <person name="Israni S."/>
            <person name="Dalin E."/>
            <person name="Tice H."/>
            <person name="Pitluck S."/>
            <person name="Sims D."/>
            <person name="Brettin T."/>
            <person name="Bruce D."/>
            <person name="Tapia R."/>
            <person name="Brainard J."/>
            <person name="Schmutz J."/>
            <person name="Larimer F."/>
            <person name="Land M."/>
            <person name="Hauser L."/>
            <person name="Kyrpides N."/>
            <person name="Mikhailova N."/>
            <person name="Bennet G."/>
            <person name="Cann I."/>
            <person name="Chen J.-S."/>
            <person name="Contreras A.L."/>
            <person name="Jones D."/>
            <person name="Kashket E."/>
            <person name="Mitchell W."/>
            <person name="Stoddard S."/>
            <person name="Schwarz W."/>
            <person name="Qureshi N."/>
            <person name="Young M."/>
            <person name="Shi Z."/>
            <person name="Ezeji T."/>
            <person name="White B."/>
            <person name="Blaschek H."/>
            <person name="Richardson P."/>
        </authorList>
    </citation>
    <scope>NUCLEOTIDE SEQUENCE [LARGE SCALE GENOMIC DNA]</scope>
    <source>
        <strain>ATCC 51743 / NCIMB 8052</strain>
    </source>
</reference>
<name>RL6_CLOB8</name>
<protein>
    <recommendedName>
        <fullName evidence="1">Large ribosomal subunit protein uL6</fullName>
    </recommendedName>
    <alternativeName>
        <fullName evidence="2">50S ribosomal protein L6</fullName>
    </alternativeName>
</protein>
<dbReference type="EMBL" id="CP000721">
    <property type="protein sequence ID" value="ABR32356.1"/>
    <property type="molecule type" value="Genomic_DNA"/>
</dbReference>
<dbReference type="RefSeq" id="WP_011967521.1">
    <property type="nucleotide sequence ID" value="NC_009617.1"/>
</dbReference>
<dbReference type="SMR" id="A6LPS6"/>
<dbReference type="GeneID" id="66343056"/>
<dbReference type="KEGG" id="cbe:Cbei_0166"/>
<dbReference type="eggNOG" id="COG0097">
    <property type="taxonomic scope" value="Bacteria"/>
</dbReference>
<dbReference type="HOGENOM" id="CLU_065464_1_2_9"/>
<dbReference type="Proteomes" id="UP000000565">
    <property type="component" value="Chromosome"/>
</dbReference>
<dbReference type="GO" id="GO:0022625">
    <property type="term" value="C:cytosolic large ribosomal subunit"/>
    <property type="evidence" value="ECO:0007669"/>
    <property type="project" value="TreeGrafter"/>
</dbReference>
<dbReference type="GO" id="GO:0019843">
    <property type="term" value="F:rRNA binding"/>
    <property type="evidence" value="ECO:0007669"/>
    <property type="project" value="UniProtKB-UniRule"/>
</dbReference>
<dbReference type="GO" id="GO:0003735">
    <property type="term" value="F:structural constituent of ribosome"/>
    <property type="evidence" value="ECO:0007669"/>
    <property type="project" value="InterPro"/>
</dbReference>
<dbReference type="GO" id="GO:0002181">
    <property type="term" value="P:cytoplasmic translation"/>
    <property type="evidence" value="ECO:0007669"/>
    <property type="project" value="TreeGrafter"/>
</dbReference>
<dbReference type="FunFam" id="3.90.930.12:FF:000001">
    <property type="entry name" value="50S ribosomal protein L6"/>
    <property type="match status" value="1"/>
</dbReference>
<dbReference type="FunFam" id="3.90.930.12:FF:000002">
    <property type="entry name" value="50S ribosomal protein L6"/>
    <property type="match status" value="1"/>
</dbReference>
<dbReference type="Gene3D" id="3.90.930.12">
    <property type="entry name" value="Ribosomal protein L6, alpha-beta domain"/>
    <property type="match status" value="2"/>
</dbReference>
<dbReference type="HAMAP" id="MF_01365_B">
    <property type="entry name" value="Ribosomal_uL6_B"/>
    <property type="match status" value="1"/>
</dbReference>
<dbReference type="InterPro" id="IPR000702">
    <property type="entry name" value="Ribosomal_uL6-like"/>
</dbReference>
<dbReference type="InterPro" id="IPR036789">
    <property type="entry name" value="Ribosomal_uL6-like_a/b-dom_sf"/>
</dbReference>
<dbReference type="InterPro" id="IPR020040">
    <property type="entry name" value="Ribosomal_uL6_a/b-dom"/>
</dbReference>
<dbReference type="InterPro" id="IPR019906">
    <property type="entry name" value="Ribosomal_uL6_bac-type"/>
</dbReference>
<dbReference type="InterPro" id="IPR002358">
    <property type="entry name" value="Ribosomal_uL6_CS"/>
</dbReference>
<dbReference type="NCBIfam" id="TIGR03654">
    <property type="entry name" value="L6_bact"/>
    <property type="match status" value="1"/>
</dbReference>
<dbReference type="PANTHER" id="PTHR11655">
    <property type="entry name" value="60S/50S RIBOSOMAL PROTEIN L6/L9"/>
    <property type="match status" value="1"/>
</dbReference>
<dbReference type="PANTHER" id="PTHR11655:SF14">
    <property type="entry name" value="LARGE RIBOSOMAL SUBUNIT PROTEIN UL6M"/>
    <property type="match status" value="1"/>
</dbReference>
<dbReference type="Pfam" id="PF00347">
    <property type="entry name" value="Ribosomal_L6"/>
    <property type="match status" value="2"/>
</dbReference>
<dbReference type="PIRSF" id="PIRSF002162">
    <property type="entry name" value="Ribosomal_L6"/>
    <property type="match status" value="1"/>
</dbReference>
<dbReference type="PRINTS" id="PR00059">
    <property type="entry name" value="RIBOSOMALL6"/>
</dbReference>
<dbReference type="SUPFAM" id="SSF56053">
    <property type="entry name" value="Ribosomal protein L6"/>
    <property type="match status" value="2"/>
</dbReference>
<dbReference type="PROSITE" id="PS00525">
    <property type="entry name" value="RIBOSOMAL_L6_1"/>
    <property type="match status" value="1"/>
</dbReference>
<keyword id="KW-0687">Ribonucleoprotein</keyword>
<keyword id="KW-0689">Ribosomal protein</keyword>
<keyword id="KW-0694">RNA-binding</keyword>
<keyword id="KW-0699">rRNA-binding</keyword>
<organism>
    <name type="scientific">Clostridium beijerinckii (strain ATCC 51743 / NCIMB 8052)</name>
    <name type="common">Clostridium acetobutylicum</name>
    <dbReference type="NCBI Taxonomy" id="290402"/>
    <lineage>
        <taxon>Bacteria</taxon>
        <taxon>Bacillati</taxon>
        <taxon>Bacillota</taxon>
        <taxon>Clostridia</taxon>
        <taxon>Eubacteriales</taxon>
        <taxon>Clostridiaceae</taxon>
        <taxon>Clostridium</taxon>
    </lineage>
</organism>
<sequence>MSRVGRLPIAIPADVTVTVTPDNLVTVKGPKGELVKTMHKDISIAVENNEVIVTRHSEQKDHRALHGLTRALINNMVIGVKQGYQKTLDLVGVGYRAQLQGKKLVMNLGYSHPVEIEPIDGITFETPAATRVIVSGIDKEKVGFAAADIRKWRVPEPYKGKGIKYENEVIRRKEGKTGKK</sequence>
<feature type="chain" id="PRO_1000087035" description="Large ribosomal subunit protein uL6">
    <location>
        <begin position="1"/>
        <end position="180"/>
    </location>
</feature>
<accession>A6LPS6</accession>